<feature type="chain" id="PRO_1000126296" description="Probable transaldolase">
    <location>
        <begin position="1"/>
        <end position="217"/>
    </location>
</feature>
<feature type="active site" description="Schiff-base intermediate with substrate" evidence="1">
    <location>
        <position position="83"/>
    </location>
</feature>
<sequence length="217" mass="23844">MKIFIDTANVEEIRKASELGVLSGVTTNPSLIAKEGRDLKEVVEEICSIVDGPISAEVISLEYEKMIEEGRELSKLHKNIVIKIPMCEEGLKAVSVLSKEGIKTNVTLIFSSMQALLAARAGATYVSPFLGRLDDIGNRGIEVVEQIADMFKIHEIKTEIIAASVRTPMHVLEAAMAGSHIATIPYKVIIQMSKHALTDIGIEKFMKDYEKAFGENK</sequence>
<organism>
    <name type="scientific">Clostridium botulinum (strain Okra / Type B1)</name>
    <dbReference type="NCBI Taxonomy" id="498213"/>
    <lineage>
        <taxon>Bacteria</taxon>
        <taxon>Bacillati</taxon>
        <taxon>Bacillota</taxon>
        <taxon>Clostridia</taxon>
        <taxon>Eubacteriales</taxon>
        <taxon>Clostridiaceae</taxon>
        <taxon>Clostridium</taxon>
    </lineage>
</organism>
<reference key="1">
    <citation type="journal article" date="2007" name="PLoS ONE">
        <title>Analysis of the neurotoxin complex genes in Clostridium botulinum A1-A4 and B1 strains: BoNT/A3, /Ba4 and /B1 clusters are located within plasmids.</title>
        <authorList>
            <person name="Smith T.J."/>
            <person name="Hill K.K."/>
            <person name="Foley B.T."/>
            <person name="Detter J.C."/>
            <person name="Munk A.C."/>
            <person name="Bruce D.C."/>
            <person name="Doggett N.A."/>
            <person name="Smith L.A."/>
            <person name="Marks J.D."/>
            <person name="Xie G."/>
            <person name="Brettin T.S."/>
        </authorList>
    </citation>
    <scope>NUCLEOTIDE SEQUENCE [LARGE SCALE GENOMIC DNA]</scope>
    <source>
        <strain>Okra / Type B1</strain>
    </source>
</reference>
<dbReference type="EC" id="2.2.1.2" evidence="1"/>
<dbReference type="EMBL" id="CP000939">
    <property type="protein sequence ID" value="ACA44404.1"/>
    <property type="molecule type" value="Genomic_DNA"/>
</dbReference>
<dbReference type="SMR" id="B1IJR0"/>
<dbReference type="KEGG" id="cbb:CLD_3275"/>
<dbReference type="HOGENOM" id="CLU_079764_0_0_9"/>
<dbReference type="UniPathway" id="UPA00115">
    <property type="reaction ID" value="UER00414"/>
</dbReference>
<dbReference type="Proteomes" id="UP000008541">
    <property type="component" value="Chromosome"/>
</dbReference>
<dbReference type="GO" id="GO:0005737">
    <property type="term" value="C:cytoplasm"/>
    <property type="evidence" value="ECO:0007669"/>
    <property type="project" value="UniProtKB-SubCell"/>
</dbReference>
<dbReference type="GO" id="GO:0016832">
    <property type="term" value="F:aldehyde-lyase activity"/>
    <property type="evidence" value="ECO:0007669"/>
    <property type="project" value="InterPro"/>
</dbReference>
<dbReference type="GO" id="GO:0004801">
    <property type="term" value="F:transaldolase activity"/>
    <property type="evidence" value="ECO:0007669"/>
    <property type="project" value="UniProtKB-UniRule"/>
</dbReference>
<dbReference type="GO" id="GO:0005975">
    <property type="term" value="P:carbohydrate metabolic process"/>
    <property type="evidence" value="ECO:0007669"/>
    <property type="project" value="InterPro"/>
</dbReference>
<dbReference type="GO" id="GO:0006098">
    <property type="term" value="P:pentose-phosphate shunt"/>
    <property type="evidence" value="ECO:0007669"/>
    <property type="project" value="UniProtKB-UniRule"/>
</dbReference>
<dbReference type="CDD" id="cd00956">
    <property type="entry name" value="Transaldolase_FSA"/>
    <property type="match status" value="1"/>
</dbReference>
<dbReference type="FunFam" id="3.20.20.70:FF:000018">
    <property type="entry name" value="Probable transaldolase"/>
    <property type="match status" value="1"/>
</dbReference>
<dbReference type="Gene3D" id="3.20.20.70">
    <property type="entry name" value="Aldolase class I"/>
    <property type="match status" value="1"/>
</dbReference>
<dbReference type="HAMAP" id="MF_00494">
    <property type="entry name" value="Transaldolase_3b"/>
    <property type="match status" value="1"/>
</dbReference>
<dbReference type="InterPro" id="IPR013785">
    <property type="entry name" value="Aldolase_TIM"/>
</dbReference>
<dbReference type="InterPro" id="IPR001585">
    <property type="entry name" value="TAL/FSA"/>
</dbReference>
<dbReference type="InterPro" id="IPR022999">
    <property type="entry name" value="Transaldolase_3B"/>
</dbReference>
<dbReference type="InterPro" id="IPR004731">
    <property type="entry name" value="Transaldolase_3B/F6P_aldolase"/>
</dbReference>
<dbReference type="InterPro" id="IPR018225">
    <property type="entry name" value="Transaldolase_AS"/>
</dbReference>
<dbReference type="InterPro" id="IPR033919">
    <property type="entry name" value="TSA/FSA_arc/bac"/>
</dbReference>
<dbReference type="NCBIfam" id="TIGR00875">
    <property type="entry name" value="fsa_talC_mipB"/>
    <property type="match status" value="1"/>
</dbReference>
<dbReference type="PANTHER" id="PTHR10683">
    <property type="entry name" value="TRANSALDOLASE"/>
    <property type="match status" value="1"/>
</dbReference>
<dbReference type="PANTHER" id="PTHR10683:SF36">
    <property type="entry name" value="TRANSALDOLASE"/>
    <property type="match status" value="1"/>
</dbReference>
<dbReference type="Pfam" id="PF00923">
    <property type="entry name" value="TAL_FSA"/>
    <property type="match status" value="1"/>
</dbReference>
<dbReference type="SUPFAM" id="SSF51569">
    <property type="entry name" value="Aldolase"/>
    <property type="match status" value="1"/>
</dbReference>
<dbReference type="PROSITE" id="PS01054">
    <property type="entry name" value="TRANSALDOLASE_1"/>
    <property type="match status" value="1"/>
</dbReference>
<dbReference type="PROSITE" id="PS00958">
    <property type="entry name" value="TRANSALDOLASE_2"/>
    <property type="match status" value="1"/>
</dbReference>
<comment type="function">
    <text evidence="1">Transaldolase is important for the balance of metabolites in the pentose-phosphate pathway.</text>
</comment>
<comment type="catalytic activity">
    <reaction evidence="1">
        <text>D-sedoheptulose 7-phosphate + D-glyceraldehyde 3-phosphate = D-erythrose 4-phosphate + beta-D-fructose 6-phosphate</text>
        <dbReference type="Rhea" id="RHEA:17053"/>
        <dbReference type="ChEBI" id="CHEBI:16897"/>
        <dbReference type="ChEBI" id="CHEBI:57483"/>
        <dbReference type="ChEBI" id="CHEBI:57634"/>
        <dbReference type="ChEBI" id="CHEBI:59776"/>
        <dbReference type="EC" id="2.2.1.2"/>
    </reaction>
</comment>
<comment type="pathway">
    <text evidence="1">Carbohydrate degradation; pentose phosphate pathway; D-glyceraldehyde 3-phosphate and beta-D-fructose 6-phosphate from D-ribose 5-phosphate and D-xylulose 5-phosphate (non-oxidative stage): step 2/3.</text>
</comment>
<comment type="subcellular location">
    <subcellularLocation>
        <location evidence="1">Cytoplasm</location>
    </subcellularLocation>
</comment>
<comment type="similarity">
    <text evidence="1">Belongs to the transaldolase family. Type 3B subfamily.</text>
</comment>
<proteinExistence type="inferred from homology"/>
<accession>B1IJR0</accession>
<evidence type="ECO:0000255" key="1">
    <source>
        <dbReference type="HAMAP-Rule" id="MF_00494"/>
    </source>
</evidence>
<gene>
    <name evidence="1" type="primary">tal</name>
    <name type="ordered locus">CLD_3275</name>
</gene>
<protein>
    <recommendedName>
        <fullName evidence="1">Probable transaldolase</fullName>
        <ecNumber evidence="1">2.2.1.2</ecNumber>
    </recommendedName>
</protein>
<name>TAL_CLOBK</name>
<keyword id="KW-0963">Cytoplasm</keyword>
<keyword id="KW-0570">Pentose shunt</keyword>
<keyword id="KW-0704">Schiff base</keyword>
<keyword id="KW-0808">Transferase</keyword>